<feature type="chain" id="PRO_0000197712" description="Rhodopsin">
    <location>
        <begin position="1"/>
        <end position="351"/>
    </location>
</feature>
<feature type="topological domain" description="Extracellular" evidence="8">
    <location>
        <begin position="1"/>
        <end position="36"/>
    </location>
</feature>
<feature type="transmembrane region" description="Helical; Name=1" evidence="1">
    <location>
        <begin position="37"/>
        <end position="61"/>
    </location>
</feature>
<feature type="topological domain" description="Cytoplasmic" evidence="8">
    <location>
        <begin position="62"/>
        <end position="73"/>
    </location>
</feature>
<feature type="transmembrane region" description="Helical; Name=2" evidence="1">
    <location>
        <begin position="74"/>
        <end position="96"/>
    </location>
</feature>
<feature type="topological domain" description="Extracellular" evidence="8">
    <location>
        <begin position="97"/>
        <end position="110"/>
    </location>
</feature>
<feature type="transmembrane region" description="Helical; Name=3" evidence="1">
    <location>
        <begin position="111"/>
        <end position="133"/>
    </location>
</feature>
<feature type="topological domain" description="Cytoplasmic" evidence="8">
    <location>
        <begin position="134"/>
        <end position="152"/>
    </location>
</feature>
<feature type="transmembrane region" description="Helical; Name=4" evidence="1">
    <location>
        <begin position="153"/>
        <end position="173"/>
    </location>
</feature>
<feature type="topological domain" description="Extracellular" evidence="8">
    <location>
        <begin position="174"/>
        <end position="202"/>
    </location>
</feature>
<feature type="transmembrane region" description="Helical; Name=5" evidence="1">
    <location>
        <begin position="203"/>
        <end position="224"/>
    </location>
</feature>
<feature type="topological domain" description="Cytoplasmic" evidence="8">
    <location>
        <begin position="225"/>
        <end position="252"/>
    </location>
</feature>
<feature type="transmembrane region" description="Helical; Name=6" evidence="1">
    <location>
        <begin position="253"/>
        <end position="274"/>
    </location>
</feature>
<feature type="topological domain" description="Extracellular" evidence="8">
    <location>
        <begin position="275"/>
        <end position="286"/>
    </location>
</feature>
<feature type="transmembrane region" description="Helical; Name=7" evidence="1">
    <location>
        <begin position="287"/>
        <end position="308"/>
    </location>
</feature>
<feature type="topological domain" description="Cytoplasmic" evidence="8">
    <location>
        <begin position="309"/>
        <end position="351"/>
    </location>
</feature>
<feature type="region of interest" description="Disordered" evidence="7">
    <location>
        <begin position="330"/>
        <end position="351"/>
    </location>
</feature>
<feature type="short sequence motif" description="'Ionic lock' involved in activated form stabilization" evidence="1">
    <location>
        <begin position="134"/>
        <end position="136"/>
    </location>
</feature>
<feature type="compositionally biased region" description="Polar residues" evidence="7">
    <location>
        <begin position="334"/>
        <end position="351"/>
    </location>
</feature>
<feature type="site" description="Plays an important role in the conformation switch to the active conformation" evidence="1">
    <location>
        <position position="113"/>
    </location>
</feature>
<feature type="modified residue" description="N6-(retinylidene)lysine" evidence="1">
    <location>
        <position position="296"/>
    </location>
</feature>
<feature type="lipid moiety-binding region" description="S-palmitoyl cysteine" evidence="1">
    <location>
        <position position="322"/>
    </location>
</feature>
<feature type="lipid moiety-binding region" description="S-palmitoyl cysteine" evidence="1">
    <location>
        <position position="323"/>
    </location>
</feature>
<feature type="glycosylation site" description="N-linked (GlcNAc...) asparagine" evidence="5">
    <location>
        <position position="2"/>
    </location>
</feature>
<feature type="glycosylation site" description="N-linked (GlcNAc...) asparagine" evidence="5">
    <location>
        <position position="15"/>
    </location>
</feature>
<feature type="glycosylation site" description="N-linked (GlcNAc...) asparagine" evidence="5">
    <location>
        <position position="200"/>
    </location>
</feature>
<feature type="disulfide bond" evidence="6">
    <location>
        <begin position="110"/>
        <end position="187"/>
    </location>
</feature>
<sequence>MNGTEGPFFYIPMSNATGLVRSPYDYPQYYLVPPWGYACLAAYMFLLILTGFPVNFLTLYVTIEHKKLRSPLNYILLNLAVADLFMVIGGFTTTMWTSLNGYFVFGRMGCNIEGFFATLGGEIALWSLVVLSMERWIVVCKPISNFRFGENHAVMGVAFSWFMAAACAVPPLVGWSRYIPEGMQCSCGIDYYTRAEGFNNESFVIYMFVVHFTCPLTIITFCYGRLVCTVKEAAAQQQESETTQRAEREVTRMVIIMFVAFLACWVPYASVAWYIFTHQGSEFGPVFMTIPAFFAKSSAVYNPVIYICLNKQFRHCMITTLCCGKNPFEEEEGSTTASKTEASSVCSVSPA</sequence>
<proteinExistence type="evidence at transcript level"/>
<protein>
    <recommendedName>
        <fullName>Rhodopsin</fullName>
    </recommendedName>
</protein>
<accession>Q9YGZ0</accession>
<organism>
    <name type="scientific">Sardina pilchardus</name>
    <name type="common">European pilchard</name>
    <name type="synonym">Clupea pilchardus</name>
    <dbReference type="NCBI Taxonomy" id="27697"/>
    <lineage>
        <taxon>Eukaryota</taxon>
        <taxon>Metazoa</taxon>
        <taxon>Chordata</taxon>
        <taxon>Craniata</taxon>
        <taxon>Vertebrata</taxon>
        <taxon>Euteleostomi</taxon>
        <taxon>Actinopterygii</taxon>
        <taxon>Neopterygii</taxon>
        <taxon>Teleostei</taxon>
        <taxon>Clupei</taxon>
        <taxon>Clupeiformes</taxon>
        <taxon>Clupeoidei</taxon>
        <taxon>Clupeidae</taxon>
        <taxon>Sardina</taxon>
    </lineage>
</organism>
<name>OPSD_SARPI</name>
<dbReference type="EMBL" id="Y18677">
    <property type="protein sequence ID" value="CAA77259.1"/>
    <property type="molecule type" value="mRNA"/>
</dbReference>
<dbReference type="SMR" id="Q9YGZ0"/>
<dbReference type="GlyCosmos" id="Q9YGZ0">
    <property type="glycosylation" value="3 sites, No reported glycans"/>
</dbReference>
<dbReference type="GO" id="GO:0016020">
    <property type="term" value="C:membrane"/>
    <property type="evidence" value="ECO:0000250"/>
    <property type="project" value="UniProtKB"/>
</dbReference>
<dbReference type="GO" id="GO:0097381">
    <property type="term" value="C:photoreceptor disc membrane"/>
    <property type="evidence" value="ECO:0000250"/>
    <property type="project" value="UniProtKB"/>
</dbReference>
<dbReference type="GO" id="GO:0005886">
    <property type="term" value="C:plasma membrane"/>
    <property type="evidence" value="ECO:0000250"/>
    <property type="project" value="UniProtKB"/>
</dbReference>
<dbReference type="GO" id="GO:0005502">
    <property type="term" value="F:11-cis retinal binding"/>
    <property type="evidence" value="ECO:0000250"/>
    <property type="project" value="UniProtKB"/>
</dbReference>
<dbReference type="GO" id="GO:0008020">
    <property type="term" value="F:G protein-coupled photoreceptor activity"/>
    <property type="evidence" value="ECO:0000250"/>
    <property type="project" value="UniProtKB"/>
</dbReference>
<dbReference type="GO" id="GO:0016038">
    <property type="term" value="P:absorption of visible light"/>
    <property type="evidence" value="ECO:0000250"/>
    <property type="project" value="UniProtKB"/>
</dbReference>
<dbReference type="GO" id="GO:0016056">
    <property type="term" value="P:G protein-coupled opsin signaling pathway"/>
    <property type="evidence" value="ECO:0000250"/>
    <property type="project" value="UniProtKB"/>
</dbReference>
<dbReference type="GO" id="GO:0007601">
    <property type="term" value="P:visual perception"/>
    <property type="evidence" value="ECO:0007669"/>
    <property type="project" value="UniProtKB-KW"/>
</dbReference>
<dbReference type="CDD" id="cd15080">
    <property type="entry name" value="7tmA_MWS_opsin"/>
    <property type="match status" value="1"/>
</dbReference>
<dbReference type="FunFam" id="1.20.1070.10:FF:000018">
    <property type="entry name" value="Rhodopsin"/>
    <property type="match status" value="1"/>
</dbReference>
<dbReference type="Gene3D" id="1.20.1070.10">
    <property type="entry name" value="Rhodopsin 7-helix transmembrane proteins"/>
    <property type="match status" value="1"/>
</dbReference>
<dbReference type="InterPro" id="IPR050125">
    <property type="entry name" value="GPCR_opsins"/>
</dbReference>
<dbReference type="InterPro" id="IPR000276">
    <property type="entry name" value="GPCR_Rhodpsn"/>
</dbReference>
<dbReference type="InterPro" id="IPR017452">
    <property type="entry name" value="GPCR_Rhodpsn_7TM"/>
</dbReference>
<dbReference type="InterPro" id="IPR001760">
    <property type="entry name" value="Opsin"/>
</dbReference>
<dbReference type="InterPro" id="IPR027430">
    <property type="entry name" value="Retinal_BS"/>
</dbReference>
<dbReference type="InterPro" id="IPR000732">
    <property type="entry name" value="Rhodopsin"/>
</dbReference>
<dbReference type="InterPro" id="IPR019477">
    <property type="entry name" value="Rhodopsin_N"/>
</dbReference>
<dbReference type="PANTHER" id="PTHR24240">
    <property type="entry name" value="OPSIN"/>
    <property type="match status" value="1"/>
</dbReference>
<dbReference type="Pfam" id="PF00001">
    <property type="entry name" value="7tm_1"/>
    <property type="match status" value="1"/>
</dbReference>
<dbReference type="Pfam" id="PF10413">
    <property type="entry name" value="Rhodopsin_N"/>
    <property type="match status" value="1"/>
</dbReference>
<dbReference type="PRINTS" id="PR00237">
    <property type="entry name" value="GPCRRHODOPSN"/>
</dbReference>
<dbReference type="PRINTS" id="PR00238">
    <property type="entry name" value="OPSIN"/>
</dbReference>
<dbReference type="PRINTS" id="PR00579">
    <property type="entry name" value="RHODOPSIN"/>
</dbReference>
<dbReference type="SUPFAM" id="SSF81321">
    <property type="entry name" value="Family A G protein-coupled receptor-like"/>
    <property type="match status" value="1"/>
</dbReference>
<dbReference type="PROSITE" id="PS00237">
    <property type="entry name" value="G_PROTEIN_RECEP_F1_1"/>
    <property type="match status" value="1"/>
</dbReference>
<dbReference type="PROSITE" id="PS50262">
    <property type="entry name" value="G_PROTEIN_RECEP_F1_2"/>
    <property type="match status" value="1"/>
</dbReference>
<dbReference type="PROSITE" id="PS00238">
    <property type="entry name" value="OPSIN"/>
    <property type="match status" value="1"/>
</dbReference>
<comment type="function">
    <text evidence="1 2 3">Photoreceptor required for image-forming vision at low light intensity. While most salt water fish species use retinal as chromophore, most freshwater fish use 3-dehydroretinal, or a mixture of retinal and 3-dehydroretinal (By similarity). Light-induced isomerization of 11-cis to all-trans retinal triggers a conformational change that activates signaling via G-proteins. Subsequent receptor phosphorylation mediates displacement of the bound G-protein alpha subunit by arrestin and terminates signaling (By similarity).</text>
</comment>
<comment type="subcellular location">
    <subcellularLocation>
        <location evidence="2">Membrane</location>
        <topology evidence="2">Multi-pass membrane protein</topology>
    </subcellularLocation>
    <subcellularLocation>
        <location evidence="4">Cell projection</location>
        <location evidence="4">Cilium</location>
        <location evidence="4">Photoreceptor outer segment</location>
    </subcellularLocation>
    <text evidence="2">Synthesized in the inner segment (IS) of rod photoreceptor cells before vectorial transport to disk membranes in the rod outer segment (OS) photosensory cilia.</text>
</comment>
<comment type="PTM">
    <text evidence="1">Phosphorylated on some or all of the serine and threonine residues present in the C-terminal region.</text>
</comment>
<comment type="PTM">
    <text evidence="1">Contains one covalently linked retinal chromophore.</text>
</comment>
<comment type="similarity">
    <text evidence="6">Belongs to the G-protein coupled receptor 1 family. Opsin subfamily.</text>
</comment>
<evidence type="ECO:0000250" key="1">
    <source>
        <dbReference type="UniProtKB" id="P02699"/>
    </source>
</evidence>
<evidence type="ECO:0000250" key="2">
    <source>
        <dbReference type="UniProtKB" id="P08100"/>
    </source>
</evidence>
<evidence type="ECO:0000250" key="3">
    <source>
        <dbReference type="UniProtKB" id="P32309"/>
    </source>
</evidence>
<evidence type="ECO:0000250" key="4">
    <source>
        <dbReference type="UniProtKB" id="P35359"/>
    </source>
</evidence>
<evidence type="ECO:0000255" key="5"/>
<evidence type="ECO:0000255" key="6">
    <source>
        <dbReference type="PROSITE-ProRule" id="PRU00521"/>
    </source>
</evidence>
<evidence type="ECO:0000256" key="7">
    <source>
        <dbReference type="SAM" id="MobiDB-lite"/>
    </source>
</evidence>
<evidence type="ECO:0000305" key="8"/>
<keyword id="KW-0966">Cell projection</keyword>
<keyword id="KW-0157">Chromophore</keyword>
<keyword id="KW-1015">Disulfide bond</keyword>
<keyword id="KW-0297">G-protein coupled receptor</keyword>
<keyword id="KW-0325">Glycoprotein</keyword>
<keyword id="KW-0449">Lipoprotein</keyword>
<keyword id="KW-0472">Membrane</keyword>
<keyword id="KW-0564">Palmitate</keyword>
<keyword id="KW-0597">Phosphoprotein</keyword>
<keyword id="KW-0600">Photoreceptor protein</keyword>
<keyword id="KW-0675">Receptor</keyword>
<keyword id="KW-0681">Retinal protein</keyword>
<keyword id="KW-0716">Sensory transduction</keyword>
<keyword id="KW-0807">Transducer</keyword>
<keyword id="KW-0812">Transmembrane</keyword>
<keyword id="KW-1133">Transmembrane helix</keyword>
<keyword id="KW-0844">Vision</keyword>
<gene>
    <name type="primary">rho</name>
</gene>
<reference key="1">
    <citation type="submission" date="1999-01" db="EMBL/GenBank/DDBJ databases">
        <title>Comparative analysis of opsins in Mediterranian coastal fish.</title>
        <authorList>
            <person name="Archer S.N."/>
            <person name="Hirano J."/>
        </authorList>
    </citation>
    <scope>NUCLEOTIDE SEQUENCE [MRNA]</scope>
    <source>
        <tissue>Retina</tissue>
    </source>
</reference>